<evidence type="ECO:0000255" key="1">
    <source>
        <dbReference type="PROSITE-ProRule" id="PRU00038"/>
    </source>
</evidence>
<evidence type="ECO:0000269" key="2">
    <source>
    </source>
</evidence>
<dbReference type="SMR" id="P49329"/>
<dbReference type="GO" id="GO:0005576">
    <property type="term" value="C:extracellular region"/>
    <property type="evidence" value="ECO:0007669"/>
    <property type="project" value="UniProtKB-SubCell"/>
</dbReference>
<dbReference type="GO" id="GO:0005537">
    <property type="term" value="F:D-mannose binding"/>
    <property type="evidence" value="ECO:0007669"/>
    <property type="project" value="UniProtKB-KW"/>
</dbReference>
<dbReference type="GO" id="GO:0051707">
    <property type="term" value="P:response to other organism"/>
    <property type="evidence" value="ECO:0007669"/>
    <property type="project" value="UniProtKB-ARBA"/>
</dbReference>
<dbReference type="CDD" id="cd00028">
    <property type="entry name" value="B_lectin"/>
    <property type="match status" value="1"/>
</dbReference>
<dbReference type="Gene3D" id="2.90.10.10">
    <property type="entry name" value="Bulb-type lectin domain"/>
    <property type="match status" value="1"/>
</dbReference>
<dbReference type="InterPro" id="IPR001480">
    <property type="entry name" value="Bulb-type_lectin_dom"/>
</dbReference>
<dbReference type="InterPro" id="IPR036426">
    <property type="entry name" value="Bulb-type_lectin_dom_sf"/>
</dbReference>
<dbReference type="SMART" id="SM00108">
    <property type="entry name" value="B_lectin"/>
    <property type="match status" value="1"/>
</dbReference>
<dbReference type="SUPFAM" id="SSF51110">
    <property type="entry name" value="alpha-D-mannose-specific plant lectins"/>
    <property type="match status" value="1"/>
</dbReference>
<dbReference type="PROSITE" id="PS50927">
    <property type="entry name" value="BULB_LECTIN"/>
    <property type="match status" value="1"/>
</dbReference>
<proteinExistence type="evidence at protein level"/>
<sequence length="109" mass="11941">DNILYSSEVLHENQYISYGPYEFIMQHDCNLVLYESGNPTWASNTGGLALHCRATLQTDGNLVVQNSANRIIWQSNTGTGTNGDYLLVLQKNGNVVIVGPPIWATGTGR</sequence>
<organism>
    <name type="scientific">Aloe arborescens</name>
    <name type="common">Kidachi aloe</name>
    <dbReference type="NCBI Taxonomy" id="45385"/>
    <lineage>
        <taxon>Eukaryota</taxon>
        <taxon>Viridiplantae</taxon>
        <taxon>Streptophyta</taxon>
        <taxon>Embryophyta</taxon>
        <taxon>Tracheophyta</taxon>
        <taxon>Spermatophyta</taxon>
        <taxon>Magnoliopsida</taxon>
        <taxon>Liliopsida</taxon>
        <taxon>Asparagales</taxon>
        <taxon>Asphodelaceae</taxon>
        <taxon>Asphodeloideae</taxon>
        <taxon>Aloe</taxon>
    </lineage>
</organism>
<comment type="function">
    <text>Mannose-specific lectin. Shows agglutinating activity toward rabbit erythrocytes and mitogenic activity towards mouse lymphocytes.</text>
</comment>
<comment type="subunit">
    <text>Homotrimer or homotetramer.</text>
</comment>
<comment type="subcellular location">
    <subcellularLocation>
        <location>Secreted</location>
    </subcellularLocation>
</comment>
<name>LEC_ALOAR</name>
<feature type="chain" id="PRO_0000021583" description="Mannose-specific lectin heavy chain">
    <location>
        <begin position="1"/>
        <end position="78"/>
    </location>
</feature>
<feature type="propeptide" id="PRO_0000021584" evidence="2">
    <location>
        <begin position="79"/>
        <end position="82"/>
    </location>
</feature>
<feature type="chain" id="PRO_0000021585" description="Mannose-specific lectin light chain">
    <location>
        <begin position="83"/>
        <end position="109"/>
    </location>
</feature>
<feature type="domain" description="Bulb-type lectin" evidence="1">
    <location>
        <begin position="1"/>
        <end position="109"/>
    </location>
</feature>
<feature type="disulfide bond">
    <location>
        <begin position="29"/>
        <end position="52"/>
    </location>
</feature>
<feature type="sequence variant">
    <original>V</original>
    <variation>I</variation>
    <location>
        <position position="63"/>
    </location>
</feature>
<feature type="sequence variant">
    <original>N</original>
    <variation>F</variation>
    <location>
        <position position="76"/>
    </location>
</feature>
<feature type="sequence variant">
    <original>N</original>
    <variation>D</variation>
    <location>
        <position position="94"/>
    </location>
</feature>
<feature type="sequence variant">
    <original>A</original>
    <variation>S</variation>
    <location>
        <position position="104"/>
    </location>
</feature>
<protein>
    <recommendedName>
        <fullName>Mannose-specific lectin</fullName>
    </recommendedName>
    <alternativeName>
        <fullName>Agglutinin</fullName>
    </alternativeName>
    <component>
        <recommendedName>
            <fullName>Mannose-specific lectin heavy chain</fullName>
        </recommendedName>
    </component>
    <component>
        <recommendedName>
            <fullName>Mannose-specific lectin light chain</fullName>
        </recommendedName>
    </component>
</protein>
<keyword id="KW-0903">Direct protein sequencing</keyword>
<keyword id="KW-1015">Disulfide bond</keyword>
<keyword id="KW-0430">Lectin</keyword>
<keyword id="KW-0465">Mannose-binding</keyword>
<keyword id="KW-0964">Secreted</keyword>
<accession>P49329</accession>
<reference key="1">
    <citation type="journal article" date="1995" name="Biochem. Biophys. Res. Commun.">
        <title>The complete amino acid sequence of a mannose-binding lectin from 'Kidachi Aloe' (Aloe arborescens Miller var. natalensis Berger).</title>
        <authorList>
            <person name="Koike T."/>
            <person name="Titani K."/>
            <person name="Suzuki M."/>
            <person name="Beppu H."/>
            <person name="Kuzuya H."/>
            <person name="Maruta K."/>
            <person name="Shimpo K."/>
            <person name="Fujita K."/>
        </authorList>
    </citation>
    <scope>PROTEIN SEQUENCE</scope>
    <source>
        <strain>cv. Natalensis Berger</strain>
        <tissue>Leaf</tissue>
    </source>
</reference>
<reference key="2">
    <citation type="journal article" date="1995" name="J. Biochem.">
        <title>A 35 kDa mannose-binding lectin with hemagglutinating and mitogenic activities from 'Kidachi Aloe' (Aloe arborescens Miller var. natalensis Berger).</title>
        <authorList>
            <person name="Koike T."/>
            <person name="Beppu H."/>
            <person name="Kuzuya H."/>
            <person name="Maruta K."/>
            <person name="Shimpo K."/>
            <person name="Suzuki M."/>
            <person name="Titani K."/>
            <person name="Fujita K."/>
        </authorList>
    </citation>
    <scope>PROTEIN SEQUENCE OF 1-24 AND 83-106</scope>
    <source>
        <strain>cv. Natalensis Berger</strain>
        <tissue>Leaf</tissue>
    </source>
</reference>